<accession>Q7XR51</accession>
<sequence>MAAAARPVDVVRHFPCSSSVAASSSLLLSRSKSRLASPAAAAASSMRRRLVLGVGAAAAPAVAALAASATPAALRDCAATLLITAGAYSLVRAFDGLTARRLIEQNLSRKIVHVLSGVLFMSSWPLFSNSTEARFFAAIVPLLNCIRLLTYGLRLSTDEALVKSVTREGKPEELLRGPLYYVIVLLVSVLVFWRQSPIGIVSLSMMSGGDGFADIVGRRYGSAKLPFNENKSWIGSISMFISGFLLSALMLFYFSCLGYFTVCWDLALGKLALVALAATVVECIPVNDVVDDNISVPLATMLAAYLLFGYSSCC</sequence>
<comment type="function">
    <text evidence="1">Involved in the activation and reutilization of phytol from chlorophyll degradation in plant metabolism, including tocopherol biosynthesis. Catalyzes the conversion of phytol to phytol monophosphate (PMP) (By similarity).</text>
</comment>
<comment type="catalytic activity">
    <reaction>
        <text>phytol + CTP = phytyl phosphate + CDP + H(+)</text>
        <dbReference type="Rhea" id="RHEA:38055"/>
        <dbReference type="ChEBI" id="CHEBI:15378"/>
        <dbReference type="ChEBI" id="CHEBI:17327"/>
        <dbReference type="ChEBI" id="CHEBI:37563"/>
        <dbReference type="ChEBI" id="CHEBI:58069"/>
        <dbReference type="ChEBI" id="CHEBI:75483"/>
        <dbReference type="EC" id="2.7.1.182"/>
    </reaction>
</comment>
<comment type="pathway">
    <text>Cofactor biosynthesis; tocopherol biosynthesis.</text>
</comment>
<comment type="subcellular location">
    <subcellularLocation>
        <location evidence="3">Plastid</location>
        <location evidence="3">Chloroplast membrane</location>
        <topology evidence="3">Multi-pass membrane protein</topology>
    </subcellularLocation>
</comment>
<comment type="similarity">
    <text evidence="3">Belongs to the polyprenol kinase family.</text>
</comment>
<name>PHYK1_ORYSJ</name>
<dbReference type="EC" id="2.7.1.182"/>
<dbReference type="EMBL" id="AL606619">
    <property type="protein sequence ID" value="CAE02829.1"/>
    <property type="molecule type" value="Genomic_DNA"/>
</dbReference>
<dbReference type="EMBL" id="AP014960">
    <property type="status" value="NOT_ANNOTATED_CDS"/>
    <property type="molecule type" value="Genomic_DNA"/>
</dbReference>
<dbReference type="EMBL" id="AK063069">
    <property type="status" value="NOT_ANNOTATED_CDS"/>
    <property type="molecule type" value="mRNA"/>
</dbReference>
<dbReference type="RefSeq" id="XP_015637046.1">
    <property type="nucleotide sequence ID" value="XM_015781560.1"/>
</dbReference>
<dbReference type="FunCoup" id="Q7XR51">
    <property type="interactions" value="70"/>
</dbReference>
<dbReference type="STRING" id="39947.Q7XR51"/>
<dbReference type="PaxDb" id="39947-Q7XR51"/>
<dbReference type="eggNOG" id="KOG4453">
    <property type="taxonomic scope" value="Eukaryota"/>
</dbReference>
<dbReference type="InParanoid" id="Q7XR51"/>
<dbReference type="OrthoDB" id="5673at2759"/>
<dbReference type="UniPathway" id="UPA00160"/>
<dbReference type="Proteomes" id="UP000000763">
    <property type="component" value="Chromosome 4"/>
</dbReference>
<dbReference type="Proteomes" id="UP000059680">
    <property type="component" value="Chromosome 4"/>
</dbReference>
<dbReference type="GO" id="GO:0009507">
    <property type="term" value="C:chloroplast"/>
    <property type="evidence" value="ECO:0000318"/>
    <property type="project" value="GO_Central"/>
</dbReference>
<dbReference type="GO" id="GO:0031969">
    <property type="term" value="C:chloroplast membrane"/>
    <property type="evidence" value="ECO:0007669"/>
    <property type="project" value="UniProtKB-SubCell"/>
</dbReference>
<dbReference type="GO" id="GO:0010276">
    <property type="term" value="F:phytol kinase activity"/>
    <property type="evidence" value="ECO:0000318"/>
    <property type="project" value="GO_Central"/>
</dbReference>
<dbReference type="GO" id="GO:0010189">
    <property type="term" value="P:vitamin E biosynthetic process"/>
    <property type="evidence" value="ECO:0000318"/>
    <property type="project" value="GO_Central"/>
</dbReference>
<dbReference type="InterPro" id="IPR039606">
    <property type="entry name" value="Phytol/farnesol_kinase"/>
</dbReference>
<dbReference type="PANTHER" id="PTHR32523:SF8">
    <property type="entry name" value="DOLICHOL KINASE"/>
    <property type="match status" value="1"/>
</dbReference>
<dbReference type="PANTHER" id="PTHR32523">
    <property type="entry name" value="PHYTOL KINASE 1, CHLOROPLASTIC"/>
    <property type="match status" value="1"/>
</dbReference>
<organism>
    <name type="scientific">Oryza sativa subsp. japonica</name>
    <name type="common">Rice</name>
    <dbReference type="NCBI Taxonomy" id="39947"/>
    <lineage>
        <taxon>Eukaryota</taxon>
        <taxon>Viridiplantae</taxon>
        <taxon>Streptophyta</taxon>
        <taxon>Embryophyta</taxon>
        <taxon>Tracheophyta</taxon>
        <taxon>Spermatophyta</taxon>
        <taxon>Magnoliopsida</taxon>
        <taxon>Liliopsida</taxon>
        <taxon>Poales</taxon>
        <taxon>Poaceae</taxon>
        <taxon>BOP clade</taxon>
        <taxon>Oryzoideae</taxon>
        <taxon>Oryzeae</taxon>
        <taxon>Oryzinae</taxon>
        <taxon>Oryza</taxon>
        <taxon>Oryza sativa</taxon>
    </lineage>
</organism>
<keyword id="KW-0150">Chloroplast</keyword>
<keyword id="KW-0418">Kinase</keyword>
<keyword id="KW-0472">Membrane</keyword>
<keyword id="KW-0934">Plastid</keyword>
<keyword id="KW-1185">Reference proteome</keyword>
<keyword id="KW-0808">Transferase</keyword>
<keyword id="KW-0809">Transit peptide</keyword>
<keyword id="KW-0812">Transmembrane</keyword>
<keyword id="KW-1133">Transmembrane helix</keyword>
<proteinExistence type="evidence at transcript level"/>
<feature type="transit peptide" description="Chloroplast" evidence="2">
    <location>
        <begin position="1"/>
        <end position="62"/>
    </location>
</feature>
<feature type="chain" id="PRO_0000226598" description="Probable phytol kinase 1, chloroplastic">
    <location>
        <begin position="63"/>
        <end position="314"/>
    </location>
</feature>
<feature type="transmembrane region" description="Helical" evidence="2">
    <location>
        <begin position="72"/>
        <end position="91"/>
    </location>
</feature>
<feature type="transmembrane region" description="Helical" evidence="2">
    <location>
        <begin position="111"/>
        <end position="131"/>
    </location>
</feature>
<feature type="transmembrane region" description="Helical" evidence="2">
    <location>
        <begin position="135"/>
        <end position="155"/>
    </location>
</feature>
<feature type="transmembrane region" description="Helical" evidence="2">
    <location>
        <begin position="181"/>
        <end position="201"/>
    </location>
</feature>
<feature type="transmembrane region" description="Helical" evidence="2">
    <location>
        <begin position="234"/>
        <end position="254"/>
    </location>
</feature>
<feature type="transmembrane region" description="Helical" evidence="2">
    <location>
        <begin position="266"/>
        <end position="286"/>
    </location>
</feature>
<feature type="transmembrane region" description="Helical" evidence="2">
    <location>
        <begin position="294"/>
        <end position="314"/>
    </location>
</feature>
<evidence type="ECO:0000250" key="1"/>
<evidence type="ECO:0000255" key="2"/>
<evidence type="ECO:0000305" key="3"/>
<gene>
    <name type="ordered locus">Os04g0670700</name>
    <name type="ordered locus">LOC_Os04g57500</name>
    <name type="ORF">OSJNBa0043A12.34</name>
</gene>
<protein>
    <recommendedName>
        <fullName>Probable phytol kinase 1, chloroplastic</fullName>
        <ecNumber>2.7.1.182</ecNumber>
    </recommendedName>
</protein>
<reference key="1">
    <citation type="journal article" date="2002" name="Nature">
        <title>Sequence and analysis of rice chromosome 4.</title>
        <authorList>
            <person name="Feng Q."/>
            <person name="Zhang Y."/>
            <person name="Hao P."/>
            <person name="Wang S."/>
            <person name="Fu G."/>
            <person name="Huang Y."/>
            <person name="Li Y."/>
            <person name="Zhu J."/>
            <person name="Liu Y."/>
            <person name="Hu X."/>
            <person name="Jia P."/>
            <person name="Zhang Y."/>
            <person name="Zhao Q."/>
            <person name="Ying K."/>
            <person name="Yu S."/>
            <person name="Tang Y."/>
            <person name="Weng Q."/>
            <person name="Zhang L."/>
            <person name="Lu Y."/>
            <person name="Mu J."/>
            <person name="Lu Y."/>
            <person name="Zhang L.S."/>
            <person name="Yu Z."/>
            <person name="Fan D."/>
            <person name="Liu X."/>
            <person name="Lu T."/>
            <person name="Li C."/>
            <person name="Wu Y."/>
            <person name="Sun T."/>
            <person name="Lei H."/>
            <person name="Li T."/>
            <person name="Hu H."/>
            <person name="Guan J."/>
            <person name="Wu M."/>
            <person name="Zhang R."/>
            <person name="Zhou B."/>
            <person name="Chen Z."/>
            <person name="Chen L."/>
            <person name="Jin Z."/>
            <person name="Wang R."/>
            <person name="Yin H."/>
            <person name="Cai Z."/>
            <person name="Ren S."/>
            <person name="Lv G."/>
            <person name="Gu W."/>
            <person name="Zhu G."/>
            <person name="Tu Y."/>
            <person name="Jia J."/>
            <person name="Zhang Y."/>
            <person name="Chen J."/>
            <person name="Kang H."/>
            <person name="Chen X."/>
            <person name="Shao C."/>
            <person name="Sun Y."/>
            <person name="Hu Q."/>
            <person name="Zhang X."/>
            <person name="Zhang W."/>
            <person name="Wang L."/>
            <person name="Ding C."/>
            <person name="Sheng H."/>
            <person name="Gu J."/>
            <person name="Chen S."/>
            <person name="Ni L."/>
            <person name="Zhu F."/>
            <person name="Chen W."/>
            <person name="Lan L."/>
            <person name="Lai Y."/>
            <person name="Cheng Z."/>
            <person name="Gu M."/>
            <person name="Jiang J."/>
            <person name="Li J."/>
            <person name="Hong G."/>
            <person name="Xue Y."/>
            <person name="Han B."/>
        </authorList>
    </citation>
    <scope>NUCLEOTIDE SEQUENCE [LARGE SCALE GENOMIC DNA]</scope>
    <source>
        <strain>cv. Nipponbare</strain>
    </source>
</reference>
<reference key="2">
    <citation type="journal article" date="2005" name="Nature">
        <title>The map-based sequence of the rice genome.</title>
        <authorList>
            <consortium name="International rice genome sequencing project (IRGSP)"/>
        </authorList>
    </citation>
    <scope>NUCLEOTIDE SEQUENCE [LARGE SCALE GENOMIC DNA]</scope>
    <source>
        <strain>cv. Nipponbare</strain>
    </source>
</reference>
<reference key="3">
    <citation type="journal article" date="2013" name="Rice">
        <title>Improvement of the Oryza sativa Nipponbare reference genome using next generation sequence and optical map data.</title>
        <authorList>
            <person name="Kawahara Y."/>
            <person name="de la Bastide M."/>
            <person name="Hamilton J.P."/>
            <person name="Kanamori H."/>
            <person name="McCombie W.R."/>
            <person name="Ouyang S."/>
            <person name="Schwartz D.C."/>
            <person name="Tanaka T."/>
            <person name="Wu J."/>
            <person name="Zhou S."/>
            <person name="Childs K.L."/>
            <person name="Davidson R.M."/>
            <person name="Lin H."/>
            <person name="Quesada-Ocampo L."/>
            <person name="Vaillancourt B."/>
            <person name="Sakai H."/>
            <person name="Lee S.S."/>
            <person name="Kim J."/>
            <person name="Numa H."/>
            <person name="Itoh T."/>
            <person name="Buell C.R."/>
            <person name="Matsumoto T."/>
        </authorList>
    </citation>
    <scope>GENOME REANNOTATION</scope>
    <source>
        <strain>cv. Nipponbare</strain>
    </source>
</reference>
<reference key="4">
    <citation type="journal article" date="2003" name="Science">
        <title>Collection, mapping, and annotation of over 28,000 cDNA clones from japonica rice.</title>
        <authorList>
            <consortium name="The rice full-length cDNA consortium"/>
        </authorList>
    </citation>
    <scope>NUCLEOTIDE SEQUENCE [LARGE SCALE MRNA] OF 205-314</scope>
    <source>
        <strain>cv. Nipponbare</strain>
    </source>
</reference>
<reference key="5">
    <citation type="journal article" date="2006" name="Plant Cell">
        <title>The Arabidopsis vitamin E pathway gene5-1 mutant reveals a critical role for phytol kinase in seed tocopherol biosynthesis.</title>
        <authorList>
            <person name="Valentin H.E."/>
            <person name="Lincoln K."/>
            <person name="Moshiri F."/>
            <person name="Jensen P.K."/>
            <person name="Qi Q."/>
            <person name="Venkatesh T.V."/>
            <person name="Karunanandaa B."/>
            <person name="Baszis S.R."/>
            <person name="Norris S.R."/>
            <person name="Savidge B."/>
            <person name="Gruys K.J."/>
            <person name="Last R.L."/>
        </authorList>
    </citation>
    <scope>IDENTIFICATION</scope>
</reference>